<reference key="1">
    <citation type="submission" date="1999-12" db="EMBL/GenBank/DDBJ databases">
        <authorList>
            <person name="Rae J.L."/>
        </authorList>
    </citation>
    <scope>NUCLEOTIDE SEQUENCE [MRNA]</scope>
    <source>
        <strain>New Zealand white</strain>
        <tissue>Corneal endothelium</tissue>
    </source>
</reference>
<organism>
    <name type="scientific">Oryctolagus cuniculus</name>
    <name type="common">Rabbit</name>
    <dbReference type="NCBI Taxonomy" id="9986"/>
    <lineage>
        <taxon>Eukaryota</taxon>
        <taxon>Metazoa</taxon>
        <taxon>Chordata</taxon>
        <taxon>Craniata</taxon>
        <taxon>Vertebrata</taxon>
        <taxon>Euteleostomi</taxon>
        <taxon>Mammalia</taxon>
        <taxon>Eutheria</taxon>
        <taxon>Euarchontoglires</taxon>
        <taxon>Glires</taxon>
        <taxon>Lagomorpha</taxon>
        <taxon>Leporidae</taxon>
        <taxon>Oryctolagus</taxon>
    </lineage>
</organism>
<feature type="initiator methionine" description="Removed" evidence="2">
    <location>
        <position position="1"/>
    </location>
</feature>
<feature type="chain" id="PRO_0000050502" description="Non-selective voltage-gated ion channel VDAC1">
    <location>
        <begin position="2"/>
        <end position="283"/>
    </location>
</feature>
<feature type="transmembrane region" description="Beta stranded" evidence="2">
    <location>
        <begin position="26"/>
        <end position="35"/>
    </location>
</feature>
<feature type="transmembrane region" description="Beta stranded" evidence="2">
    <location>
        <begin position="39"/>
        <end position="47"/>
    </location>
</feature>
<feature type="transmembrane region" description="Beta stranded" evidence="2">
    <location>
        <begin position="54"/>
        <end position="64"/>
    </location>
</feature>
<feature type="transmembrane region" description="Beta stranded" evidence="2">
    <location>
        <begin position="69"/>
        <end position="76"/>
    </location>
</feature>
<feature type="transmembrane region" description="Beta stranded" evidence="2">
    <location>
        <begin position="80"/>
        <end position="89"/>
    </location>
</feature>
<feature type="transmembrane region" description="Beta stranded" evidence="2">
    <location>
        <begin position="95"/>
        <end position="104"/>
    </location>
</feature>
<feature type="transmembrane region" description="Beta stranded" evidence="2">
    <location>
        <begin position="111"/>
        <end position="120"/>
    </location>
</feature>
<feature type="transmembrane region" description="Beta stranded" evidence="2">
    <location>
        <begin position="123"/>
        <end position="130"/>
    </location>
</feature>
<feature type="transmembrane region" description="Beta stranded" evidence="2">
    <location>
        <begin position="137"/>
        <end position="145"/>
    </location>
</feature>
<feature type="transmembrane region" description="Beta stranded" evidence="2">
    <location>
        <begin position="150"/>
        <end position="158"/>
    </location>
</feature>
<feature type="transmembrane region" description="Beta stranded" evidence="2">
    <location>
        <begin position="163"/>
        <end position="175"/>
    </location>
</feature>
<feature type="transmembrane region" description="Beta stranded" evidence="2">
    <location>
        <begin position="178"/>
        <end position="185"/>
    </location>
</feature>
<feature type="transmembrane region" description="Beta stranded" evidence="2">
    <location>
        <begin position="189"/>
        <end position="198"/>
    </location>
</feature>
<feature type="transmembrane region" description="Beta stranded" evidence="2">
    <location>
        <begin position="202"/>
        <end position="211"/>
    </location>
</feature>
<feature type="transmembrane region" description="Beta stranded" evidence="2">
    <location>
        <begin position="218"/>
        <end position="227"/>
    </location>
</feature>
<feature type="transmembrane region" description="Beta stranded" evidence="2">
    <location>
        <begin position="231"/>
        <end position="238"/>
    </location>
</feature>
<feature type="transmembrane region" description="Beta stranded" evidence="2">
    <location>
        <begin position="242"/>
        <end position="251"/>
    </location>
</feature>
<feature type="transmembrane region" description="Beta stranded" evidence="2">
    <location>
        <begin position="254"/>
        <end position="263"/>
    </location>
</feature>
<feature type="transmembrane region" description="Beta stranded" evidence="2">
    <location>
        <begin position="273"/>
        <end position="282"/>
    </location>
</feature>
<feature type="binding site" evidence="4">
    <location>
        <position position="12"/>
    </location>
    <ligand>
        <name>ATP</name>
        <dbReference type="ChEBI" id="CHEBI:30616"/>
    </ligand>
</feature>
<feature type="binding site" evidence="4">
    <location>
        <position position="20"/>
    </location>
    <ligand>
        <name>ATP</name>
        <dbReference type="ChEBI" id="CHEBI:30616"/>
    </ligand>
</feature>
<feature type="binding site" evidence="2">
    <location>
        <begin position="242"/>
        <end position="244"/>
    </location>
    <ligand>
        <name>NAD(+)</name>
        <dbReference type="ChEBI" id="CHEBI:57540"/>
    </ligand>
</feature>
<feature type="binding site" evidence="2">
    <location>
        <begin position="260"/>
        <end position="264"/>
    </location>
    <ligand>
        <name>NAD(+)</name>
        <dbReference type="ChEBI" id="CHEBI:57540"/>
    </ligand>
</feature>
<feature type="site" description="Involved in ceramide and phosphatidylcholine binding. Critical for channel structural stability and gating" evidence="2">
    <location>
        <position position="73"/>
    </location>
</feature>
<feature type="modified residue" description="N-acetylalanine" evidence="2">
    <location>
        <position position="2"/>
    </location>
</feature>
<feature type="modified residue" description="Phosphoserine" evidence="5">
    <location>
        <position position="13"/>
    </location>
</feature>
<feature type="modified residue" description="Phosphothreonine" evidence="4">
    <location>
        <position position="19"/>
    </location>
</feature>
<feature type="modified residue" description="N6-acetyllysine; alternate" evidence="2">
    <location>
        <position position="20"/>
    </location>
</feature>
<feature type="modified residue" description="N6-succinyllysine; alternate" evidence="4">
    <location>
        <position position="20"/>
    </location>
</feature>
<feature type="modified residue" description="Phosphotyrosine" evidence="4">
    <location>
        <position position="67"/>
    </location>
</feature>
<feature type="modified residue" description="Phosphothreonine" evidence="2">
    <location>
        <position position="107"/>
    </location>
</feature>
<feature type="modified residue" description="N6-acetyllysine; alternate" evidence="4">
    <location>
        <position position="109"/>
    </location>
</feature>
<feature type="modified residue" description="Phosphoserine; by NEK1" evidence="2">
    <location>
        <position position="193"/>
    </location>
</feature>
<feature type="modified residue" description="Phosphoserine" evidence="2">
    <location>
        <position position="240"/>
    </location>
</feature>
<feature type="modified residue" description="N6-acetyllysine" evidence="4">
    <location>
        <position position="252"/>
    </location>
</feature>
<feature type="modified residue" description="N6-acetyllysine; alternate" evidence="2">
    <location>
        <position position="266"/>
    </location>
</feature>
<feature type="cross-link" description="Glycyl lysine isopeptide (Lys-Gly) (interchain with G-Cter in ubiquitin)" evidence="2">
    <location>
        <position position="12"/>
    </location>
</feature>
<feature type="cross-link" description="Glycyl lysine isopeptide (Lys-Gly) (interchain with G-Cter in ubiquitin); alternate" evidence="3">
    <location>
        <position position="20"/>
    </location>
</feature>
<feature type="cross-link" description="Glycyl lysine isopeptide (Lys-Gly) (interchain with G-Cter in ubiquitin)" evidence="2">
    <location>
        <position position="53"/>
    </location>
</feature>
<feature type="cross-link" description="Glycyl lysine isopeptide (Lys-Gly) (interchain with G-Cter in ubiquitin)" evidence="2">
    <location>
        <position position="61"/>
    </location>
</feature>
<feature type="cross-link" description="Glycyl lysine isopeptide (Lys-Gly) (interchain with G-Cter in ubiquitin); alternate" evidence="2">
    <location>
        <position position="109"/>
    </location>
</feature>
<feature type="cross-link" description="Glycyl lysine isopeptide (Lys-Gly) (interchain with G-Cter in ubiquitin)" evidence="2">
    <location>
        <position position="110"/>
    </location>
</feature>
<feature type="cross-link" description="Glycyl lysine isopeptide (Lys-Gly) (interchain with G-Cter in ubiquitin)" evidence="2">
    <location>
        <position position="161"/>
    </location>
</feature>
<feature type="cross-link" description="Glycyl lysine isopeptide (Lys-Gly) (interchain with G-Cter in ubiquitin); alternate" evidence="2">
    <location>
        <position position="266"/>
    </location>
</feature>
<feature type="cross-link" description="Glycyl lysine isopeptide (Lys-Gly) (interchain with G-Cter in ubiquitin)" evidence="2">
    <location>
        <position position="274"/>
    </location>
</feature>
<protein>
    <recommendedName>
        <fullName evidence="2">Non-selective voltage-gated ion channel VDAC1</fullName>
    </recommendedName>
    <alternativeName>
        <fullName>Outer mitochondrial membrane protein porin 1</fullName>
    </alternativeName>
    <alternativeName>
        <fullName>Voltage-dependent anion-selective channel protein 1</fullName>
        <shortName>VDAC-1</shortName>
    </alternativeName>
</protein>
<evidence type="ECO:0000250" key="1">
    <source>
        <dbReference type="UniProtKB" id="A0A6P7EFR0"/>
    </source>
</evidence>
<evidence type="ECO:0000250" key="2">
    <source>
        <dbReference type="UniProtKB" id="P21796"/>
    </source>
</evidence>
<evidence type="ECO:0000250" key="3">
    <source>
        <dbReference type="UniProtKB" id="P45880"/>
    </source>
</evidence>
<evidence type="ECO:0000250" key="4">
    <source>
        <dbReference type="UniProtKB" id="Q60932"/>
    </source>
</evidence>
<evidence type="ECO:0000250" key="5">
    <source>
        <dbReference type="UniProtKB" id="Q9Z2L0"/>
    </source>
</evidence>
<evidence type="ECO:0000305" key="6"/>
<name>VDAC1_RABIT</name>
<proteinExistence type="evidence at transcript level"/>
<comment type="function">
    <text evidence="2 4">Non-selective voltage-gated ion channel that mediates the transport of anions and cations through the mitochondrion outer membrane and plasma membrane. The channel at the outer mitochondrial membrane allows diffusion of small hydrophilic molecules; in the plasma membrane it is involved in cell volume regulation and apoptosis. It adopts an open conformation at low or zero membrane potential and a closed conformation at potentials above 30-40 mV. The open state has a weak anion selectivity whereas the closed state is cation-selective. Binds various signaling molecules, including the sphingolipid ceramide, the phospholipid phosphatidylcholine, and the sterols cholesterol and oxysterol. In depolarized mitochondria, acts downstream of PRKN and PINK1 to promote mitophagy or prevent apoptosis; polyubiquitination by PRKN promotes mitophagy, while monoubiquitination by PRKN decreases mitochondrial calcium influx which ultimately inhibits apoptosis. May participate in the formation of the permeability transition pore complex (PTPC) responsible for the release of mitochondrial products that triggers apoptosis. May mediate ATP export from cells (By similarity). Part of a complex composed of HSPA9, ITPR1 and VDAC1 that regulates mitochondrial calcium-dependent apoptosis by facilitating calcium transport from the ER lumen to the mitochondria intermembrane space thus providing calcium for the downstream calcium channel MCU that directly releases it into mitochondria matrix (By similarity). Mediates cytochrome c efflux (By similarity).</text>
</comment>
<comment type="function">
    <text evidence="2">Catalyzes the scrambling of phospholipids across the outer mitochondrial membrane; the mechanism is unrelated to channel activity and is capable of translocating both anionic and zwitterionic phospholipids.</text>
</comment>
<comment type="catalytic activity">
    <reaction evidence="2">
        <text>chloride(in) = chloride(out)</text>
        <dbReference type="Rhea" id="RHEA:29823"/>
        <dbReference type="ChEBI" id="CHEBI:17996"/>
    </reaction>
</comment>
<comment type="catalytic activity">
    <reaction evidence="2">
        <text>K(+)(in) = K(+)(out)</text>
        <dbReference type="Rhea" id="RHEA:29463"/>
        <dbReference type="ChEBI" id="CHEBI:29103"/>
    </reaction>
</comment>
<comment type="catalytic activity">
    <reaction evidence="2">
        <text>ATP(in) = ATP(out)</text>
        <dbReference type="Rhea" id="RHEA:75687"/>
        <dbReference type="ChEBI" id="CHEBI:30616"/>
    </reaction>
</comment>
<comment type="catalytic activity">
    <reaction evidence="5">
        <text>Ca(2+)(in) = Ca(2+)(out)</text>
        <dbReference type="Rhea" id="RHEA:29671"/>
        <dbReference type="ChEBI" id="CHEBI:29108"/>
    </reaction>
</comment>
<comment type="catalytic activity">
    <reaction evidence="5">
        <text>Na(+)(in) = Na(+)(out)</text>
        <dbReference type="Rhea" id="RHEA:34963"/>
        <dbReference type="ChEBI" id="CHEBI:29101"/>
    </reaction>
</comment>
<comment type="catalytic activity">
    <reaction evidence="5">
        <text>Mg(2+)(in) = Mg(2+)(out)</text>
        <dbReference type="Rhea" id="RHEA:29827"/>
        <dbReference type="ChEBI" id="CHEBI:18420"/>
    </reaction>
</comment>
<comment type="catalytic activity">
    <reaction evidence="1">
        <text>L-glutamate(out) = L-glutamate(in)</text>
        <dbReference type="Rhea" id="RHEA:66336"/>
        <dbReference type="ChEBI" id="CHEBI:29985"/>
    </reaction>
</comment>
<comment type="catalytic activity">
    <reaction evidence="1">
        <text>dopamine(out) = dopamine(in)</text>
        <dbReference type="Rhea" id="RHEA:73863"/>
        <dbReference type="ChEBI" id="CHEBI:59905"/>
    </reaction>
</comment>
<comment type="catalytic activity">
    <reaction evidence="1">
        <text>acetylcholine(in) = acetylcholine(out)</text>
        <dbReference type="Rhea" id="RHEA:74663"/>
        <dbReference type="ChEBI" id="CHEBI:15355"/>
    </reaction>
</comment>
<comment type="catalytic activity">
    <reaction evidence="2">
        <text>Fe(III)-[cytochrome c](out) = Fe(III)-[cytochrome c](in)</text>
        <dbReference type="Rhea" id="RHEA:79311"/>
        <dbReference type="Rhea" id="RHEA-COMP:14399"/>
        <dbReference type="ChEBI" id="CHEBI:29034"/>
    </reaction>
</comment>
<comment type="catalytic activity">
    <reaction evidence="2">
        <text>a 1,2-diacyl-sn-glycero-3-phosphocholine(in) = a 1,2-diacyl-sn-glycero-3-phosphocholine(out)</text>
        <dbReference type="Rhea" id="RHEA:38571"/>
        <dbReference type="ChEBI" id="CHEBI:57643"/>
    </reaction>
</comment>
<comment type="catalytic activity">
    <reaction evidence="2">
        <text>a 1,2-diacyl-sn-glycero-3-phospho-L-serine(in) = a 1,2-diacyl-sn-glycero-3-phospho-L-serine(out)</text>
        <dbReference type="Rhea" id="RHEA:38663"/>
        <dbReference type="ChEBI" id="CHEBI:57262"/>
    </reaction>
</comment>
<comment type="activity regulation">
    <text evidence="2">Inhibited by nitric oxide.</text>
</comment>
<comment type="subunit">
    <text evidence="2 5">Homodimer and homotrimer; in response to cyclic AMP or calcium; oligomerization is required for scramblase activity. Component of the mitochondrial permeability transition pore complex (mPTPC), at least composed of SPG7, VDAC1 and PPIF. Interacts with SPG7, NIPSNAP2 and SLC25A30. Interacts with hexokinases including HK1. The HK1-VDAC1 complex interacts with ATF2. Interacts with BCL2L1. Interacts with BAK1. Interacts with RTL10/BOP (via BH3 domain). Interacts with amyloid-beta and APP; induces VDAC1 dephosphorylation. Interacts with TMEM41B. Interacts with BCAP31 (By similarity). Interacts with HSPA9; this interaction couples ITPR1 to VDAC1 (By similarity).</text>
</comment>
<comment type="subcellular location">
    <subcellularLocation>
        <location evidence="2">Mitochondrion outer membrane</location>
        <topology evidence="2">Multi-pass membrane protein</topology>
    </subcellularLocation>
    <subcellularLocation>
        <location evidence="2">Cell membrane</location>
        <topology evidence="2">Multi-pass membrane protein</topology>
    </subcellularLocation>
    <subcellularLocation>
        <location evidence="2">Membrane raft</location>
        <topology evidence="2">Multi-pass membrane protein</topology>
    </subcellularLocation>
    <text evidence="5">Found in a complex with HSPA9 and VDAC1 at the endoplasmic reticulum-mitochondria contact sites.</text>
</comment>
<comment type="domain">
    <text evidence="2">Consists mainly of a membrane-spanning beta-barrel formed by 19 beta-strands. The helical N-terminus folds back into the pore opening and plays a role in voltage-gated channel activity.</text>
</comment>
<comment type="PTM">
    <text evidence="2">Phosphorylation at Ser-193 by NEK1 promotes the closed conformational state preventing excessive mitochondrial membrane permeability and subsequent apoptotic cell death after injury. Phosphorylation by the AKT-GSK3B axis stabilizes the protein probably by preventing ubiquitin-mediated proteasomal degradation.</text>
</comment>
<comment type="PTM">
    <text evidence="2">Ubiquitinated. Undergoes monoubiquitination and polyubiquitination by PRKN; monoubiquitination at Lys-274 inhibits apoptosis, whereas polyubiquitination leads to its degradation and promotes mitophagy. Deubiquitinated by USP30.</text>
</comment>
<comment type="similarity">
    <text evidence="6">Belongs to the eukaryotic mitochondrial porin family.</text>
</comment>
<accession>Q9TT15</accession>
<dbReference type="EMBL" id="AF209725">
    <property type="protein sequence ID" value="AAF22835.1"/>
    <property type="molecule type" value="mRNA"/>
</dbReference>
<dbReference type="RefSeq" id="NP_001075544.1">
    <property type="nucleotide sequence ID" value="NM_001082075.1"/>
</dbReference>
<dbReference type="RefSeq" id="XP_008253053.1">
    <property type="nucleotide sequence ID" value="XM_008254831.4"/>
</dbReference>
<dbReference type="RefSeq" id="XP_051699200.1">
    <property type="nucleotide sequence ID" value="XM_051843240.2"/>
</dbReference>
<dbReference type="RefSeq" id="XP_069931065.1">
    <property type="nucleotide sequence ID" value="XM_070074964.1"/>
</dbReference>
<dbReference type="RefSeq" id="XP_069931066.1">
    <property type="nucleotide sequence ID" value="XM_070074965.1"/>
</dbReference>
<dbReference type="RefSeq" id="XP_069931067.1">
    <property type="nucleotide sequence ID" value="XM_070074966.1"/>
</dbReference>
<dbReference type="RefSeq" id="XP_069931068.1">
    <property type="nucleotide sequence ID" value="XM_070074967.1"/>
</dbReference>
<dbReference type="RefSeq" id="XP_069931069.1">
    <property type="nucleotide sequence ID" value="XM_070074968.1"/>
</dbReference>
<dbReference type="BMRB" id="Q9TT15"/>
<dbReference type="SMR" id="Q9TT15"/>
<dbReference type="FunCoup" id="Q9TT15">
    <property type="interactions" value="1316"/>
</dbReference>
<dbReference type="STRING" id="9986.ENSOCUP00000008083"/>
<dbReference type="PaxDb" id="9986-ENSOCUP00000008083"/>
<dbReference type="Ensembl" id="ENSOCUT00000009371.4">
    <property type="protein sequence ID" value="ENSOCUP00000008083.2"/>
    <property type="gene ID" value="ENSOCUG00000009369.4"/>
</dbReference>
<dbReference type="GeneID" id="100008751"/>
<dbReference type="KEGG" id="ocu:100008751"/>
<dbReference type="CTD" id="7416"/>
<dbReference type="eggNOG" id="KOG3126">
    <property type="taxonomic scope" value="Eukaryota"/>
</dbReference>
<dbReference type="GeneTree" id="ENSGT00950000182869"/>
<dbReference type="HOGENOM" id="CLU_044399_2_0_1"/>
<dbReference type="InParanoid" id="Q9TT15"/>
<dbReference type="OMA" id="KPCCSHE"/>
<dbReference type="OrthoDB" id="7827681at2759"/>
<dbReference type="TreeFam" id="TF315091"/>
<dbReference type="Proteomes" id="UP000001811">
    <property type="component" value="Chromosome 3"/>
</dbReference>
<dbReference type="Bgee" id="ENSOCUG00000009369">
    <property type="expression patterns" value="Expressed in skeletal muscle tissue and 15 other cell types or tissues"/>
</dbReference>
<dbReference type="GO" id="GO:0016020">
    <property type="term" value="C:membrane"/>
    <property type="evidence" value="ECO:0000250"/>
    <property type="project" value="UniProtKB"/>
</dbReference>
<dbReference type="GO" id="GO:0045121">
    <property type="term" value="C:membrane raft"/>
    <property type="evidence" value="ECO:0007669"/>
    <property type="project" value="UniProtKB-SubCell"/>
</dbReference>
<dbReference type="GO" id="GO:0005741">
    <property type="term" value="C:mitochondrial outer membrane"/>
    <property type="evidence" value="ECO:0000250"/>
    <property type="project" value="UniProtKB"/>
</dbReference>
<dbReference type="GO" id="GO:0005757">
    <property type="term" value="C:mitochondrial permeability transition pore complex"/>
    <property type="evidence" value="ECO:0000250"/>
    <property type="project" value="UniProtKB"/>
</dbReference>
<dbReference type="GO" id="GO:0005886">
    <property type="term" value="C:plasma membrane"/>
    <property type="evidence" value="ECO:0000250"/>
    <property type="project" value="UniProtKB"/>
</dbReference>
<dbReference type="GO" id="GO:0005524">
    <property type="term" value="F:ATP binding"/>
    <property type="evidence" value="ECO:0007669"/>
    <property type="project" value="UniProtKB-KW"/>
</dbReference>
<dbReference type="GO" id="GO:0008142">
    <property type="term" value="F:oxysterol binding"/>
    <property type="evidence" value="ECO:0000250"/>
    <property type="project" value="UniProtKB"/>
</dbReference>
<dbReference type="GO" id="GO:0015288">
    <property type="term" value="F:porin activity"/>
    <property type="evidence" value="ECO:0007669"/>
    <property type="project" value="UniProtKB-KW"/>
</dbReference>
<dbReference type="GO" id="GO:0022832">
    <property type="term" value="F:voltage-gated channel activity"/>
    <property type="evidence" value="ECO:0000250"/>
    <property type="project" value="UniProtKB"/>
</dbReference>
<dbReference type="GO" id="GO:0008308">
    <property type="term" value="F:voltage-gated monoatomic anion channel activity"/>
    <property type="evidence" value="ECO:0000250"/>
    <property type="project" value="UniProtKB"/>
</dbReference>
<dbReference type="GO" id="GO:0005244">
    <property type="term" value="F:voltage-gated monoatomic ion channel activity"/>
    <property type="evidence" value="ECO:0000250"/>
    <property type="project" value="UniProtKB"/>
</dbReference>
<dbReference type="GO" id="GO:0006915">
    <property type="term" value="P:apoptotic process"/>
    <property type="evidence" value="ECO:0000250"/>
    <property type="project" value="UniProtKB"/>
</dbReference>
<dbReference type="GO" id="GO:0036444">
    <property type="term" value="P:calcium import into the mitochondrion"/>
    <property type="evidence" value="ECO:0000250"/>
    <property type="project" value="UniProtKB"/>
</dbReference>
<dbReference type="GO" id="GO:0006869">
    <property type="term" value="P:lipid transport"/>
    <property type="evidence" value="ECO:0007669"/>
    <property type="project" value="UniProtKB-KW"/>
</dbReference>
<dbReference type="GO" id="GO:0006820">
    <property type="term" value="P:monoatomic anion transport"/>
    <property type="evidence" value="ECO:0000250"/>
    <property type="project" value="UniProtKB"/>
</dbReference>
<dbReference type="CDD" id="cd07306">
    <property type="entry name" value="Porin3_VDAC"/>
    <property type="match status" value="1"/>
</dbReference>
<dbReference type="FunFam" id="2.40.160.10:FF:000001">
    <property type="entry name" value="Voltage-dependent anion-selective channel protein 2"/>
    <property type="match status" value="1"/>
</dbReference>
<dbReference type="Gene3D" id="2.40.160.10">
    <property type="entry name" value="Porin"/>
    <property type="match status" value="1"/>
</dbReference>
<dbReference type="InterPro" id="IPR023614">
    <property type="entry name" value="Porin_dom_sf"/>
</dbReference>
<dbReference type="InterPro" id="IPR001925">
    <property type="entry name" value="Porin_Euk"/>
</dbReference>
<dbReference type="InterPro" id="IPR027246">
    <property type="entry name" value="Porin_Euk/Tom40"/>
</dbReference>
<dbReference type="PANTHER" id="PTHR11743">
    <property type="entry name" value="VOLTAGE-DEPENDENT ANION-SELECTIVE CHANNEL"/>
    <property type="match status" value="1"/>
</dbReference>
<dbReference type="PANTHER" id="PTHR11743:SF13">
    <property type="entry name" value="VOLTAGE-DEPENDENT ANION-SELECTIVE CHANNEL PROTEIN 1"/>
    <property type="match status" value="1"/>
</dbReference>
<dbReference type="Pfam" id="PF01459">
    <property type="entry name" value="Porin_3"/>
    <property type="match status" value="1"/>
</dbReference>
<dbReference type="PRINTS" id="PR00185">
    <property type="entry name" value="EUKARYTPORIN"/>
</dbReference>
<dbReference type="PROSITE" id="PS00558">
    <property type="entry name" value="EUKARYOTIC_PORIN"/>
    <property type="match status" value="1"/>
</dbReference>
<gene>
    <name evidence="2" type="primary">VDAC1</name>
</gene>
<keyword id="KW-0007">Acetylation</keyword>
<keyword id="KW-0053">Apoptosis</keyword>
<keyword id="KW-0067">ATP-binding</keyword>
<keyword id="KW-1003">Cell membrane</keyword>
<keyword id="KW-0406">Ion transport</keyword>
<keyword id="KW-1017">Isopeptide bond</keyword>
<keyword id="KW-0445">Lipid transport</keyword>
<keyword id="KW-0446">Lipid-binding</keyword>
<keyword id="KW-0472">Membrane</keyword>
<keyword id="KW-0496">Mitochondrion</keyword>
<keyword id="KW-1000">Mitochondrion outer membrane</keyword>
<keyword id="KW-0520">NAD</keyword>
<keyword id="KW-0547">Nucleotide-binding</keyword>
<keyword id="KW-0597">Phosphoprotein</keyword>
<keyword id="KW-0626">Porin</keyword>
<keyword id="KW-1185">Reference proteome</keyword>
<keyword id="KW-0812">Transmembrane</keyword>
<keyword id="KW-1134">Transmembrane beta strand</keyword>
<keyword id="KW-0813">Transport</keyword>
<keyword id="KW-0832">Ubl conjugation</keyword>
<sequence>MAVPPTYADLGKSARDVFTKGYGFGLIKLDLKTKSENGLEFTSSGSANTETTKVTGSLETKYRWTEYGLTFTEKWNTDNTLGTEITVEDQLARGLKLTFDSSFSPNTGKKNAKIKTGYKREHINLGCDVDFDIAGPSIRGALVLGYEGWLAGYQMNFETAKSRVTQSNFAVGYKTDEFQLHTNVNDGTEFGGSIYQKVNKKLETAVNLAWTAGNSNTRFGIAAKYQIDPDACFSAKVNNSSLIGLGYTQTLKPGIKLTLSALLDGKNVNAGGHKLGLGLEFQA</sequence>